<reference key="1">
    <citation type="submission" date="2006-02" db="EMBL/GenBank/DDBJ databases">
        <title>Complete sequence of chromosome of Rhodoferax ferrireducens DSM 15236.</title>
        <authorList>
            <person name="Copeland A."/>
            <person name="Lucas S."/>
            <person name="Lapidus A."/>
            <person name="Barry K."/>
            <person name="Detter J.C."/>
            <person name="Glavina del Rio T."/>
            <person name="Hammon N."/>
            <person name="Israni S."/>
            <person name="Pitluck S."/>
            <person name="Brettin T."/>
            <person name="Bruce D."/>
            <person name="Han C."/>
            <person name="Tapia R."/>
            <person name="Gilna P."/>
            <person name="Kiss H."/>
            <person name="Schmutz J."/>
            <person name="Larimer F."/>
            <person name="Land M."/>
            <person name="Kyrpides N."/>
            <person name="Ivanova N."/>
            <person name="Richardson P."/>
        </authorList>
    </citation>
    <scope>NUCLEOTIDE SEQUENCE [LARGE SCALE GENOMIC DNA]</scope>
    <source>
        <strain>ATCC BAA-621 / DSM 15236 / T118</strain>
    </source>
</reference>
<accession>Q21ZH9</accession>
<dbReference type="EC" id="2.7.7.23" evidence="1"/>
<dbReference type="EC" id="2.3.1.157" evidence="1"/>
<dbReference type="EMBL" id="CP000267">
    <property type="protein sequence ID" value="ABD68824.1"/>
    <property type="status" value="ALT_INIT"/>
    <property type="molecule type" value="Genomic_DNA"/>
</dbReference>
<dbReference type="SMR" id="Q21ZH9"/>
<dbReference type="STRING" id="338969.Rfer_1083"/>
<dbReference type="KEGG" id="rfr:Rfer_1083"/>
<dbReference type="eggNOG" id="COG1207">
    <property type="taxonomic scope" value="Bacteria"/>
</dbReference>
<dbReference type="HOGENOM" id="CLU_029499_15_2_4"/>
<dbReference type="UniPathway" id="UPA00113">
    <property type="reaction ID" value="UER00532"/>
</dbReference>
<dbReference type="UniPathway" id="UPA00113">
    <property type="reaction ID" value="UER00533"/>
</dbReference>
<dbReference type="UniPathway" id="UPA00973"/>
<dbReference type="Proteomes" id="UP000008332">
    <property type="component" value="Chromosome"/>
</dbReference>
<dbReference type="GO" id="GO:0005737">
    <property type="term" value="C:cytoplasm"/>
    <property type="evidence" value="ECO:0007669"/>
    <property type="project" value="UniProtKB-SubCell"/>
</dbReference>
<dbReference type="GO" id="GO:0016020">
    <property type="term" value="C:membrane"/>
    <property type="evidence" value="ECO:0007669"/>
    <property type="project" value="GOC"/>
</dbReference>
<dbReference type="GO" id="GO:0019134">
    <property type="term" value="F:glucosamine-1-phosphate N-acetyltransferase activity"/>
    <property type="evidence" value="ECO:0007669"/>
    <property type="project" value="UniProtKB-UniRule"/>
</dbReference>
<dbReference type="GO" id="GO:0000287">
    <property type="term" value="F:magnesium ion binding"/>
    <property type="evidence" value="ECO:0007669"/>
    <property type="project" value="UniProtKB-UniRule"/>
</dbReference>
<dbReference type="GO" id="GO:0003977">
    <property type="term" value="F:UDP-N-acetylglucosamine diphosphorylase activity"/>
    <property type="evidence" value="ECO:0007669"/>
    <property type="project" value="UniProtKB-UniRule"/>
</dbReference>
<dbReference type="GO" id="GO:0000902">
    <property type="term" value="P:cell morphogenesis"/>
    <property type="evidence" value="ECO:0007669"/>
    <property type="project" value="UniProtKB-UniRule"/>
</dbReference>
<dbReference type="GO" id="GO:0071555">
    <property type="term" value="P:cell wall organization"/>
    <property type="evidence" value="ECO:0007669"/>
    <property type="project" value="UniProtKB-KW"/>
</dbReference>
<dbReference type="GO" id="GO:0009245">
    <property type="term" value="P:lipid A biosynthetic process"/>
    <property type="evidence" value="ECO:0007669"/>
    <property type="project" value="UniProtKB-UniRule"/>
</dbReference>
<dbReference type="GO" id="GO:0009252">
    <property type="term" value="P:peptidoglycan biosynthetic process"/>
    <property type="evidence" value="ECO:0007669"/>
    <property type="project" value="UniProtKB-UniRule"/>
</dbReference>
<dbReference type="GO" id="GO:0008360">
    <property type="term" value="P:regulation of cell shape"/>
    <property type="evidence" value="ECO:0007669"/>
    <property type="project" value="UniProtKB-KW"/>
</dbReference>
<dbReference type="GO" id="GO:0006048">
    <property type="term" value="P:UDP-N-acetylglucosamine biosynthetic process"/>
    <property type="evidence" value="ECO:0007669"/>
    <property type="project" value="UniProtKB-UniPathway"/>
</dbReference>
<dbReference type="CDD" id="cd02540">
    <property type="entry name" value="GT2_GlmU_N_bac"/>
    <property type="match status" value="1"/>
</dbReference>
<dbReference type="CDD" id="cd03353">
    <property type="entry name" value="LbH_GlmU_C"/>
    <property type="match status" value="1"/>
</dbReference>
<dbReference type="Gene3D" id="2.160.10.10">
    <property type="entry name" value="Hexapeptide repeat proteins"/>
    <property type="match status" value="1"/>
</dbReference>
<dbReference type="Gene3D" id="3.90.550.10">
    <property type="entry name" value="Spore Coat Polysaccharide Biosynthesis Protein SpsA, Chain A"/>
    <property type="match status" value="1"/>
</dbReference>
<dbReference type="HAMAP" id="MF_01631">
    <property type="entry name" value="GlmU"/>
    <property type="match status" value="1"/>
</dbReference>
<dbReference type="InterPro" id="IPR005882">
    <property type="entry name" value="Bifunctional_GlmU"/>
</dbReference>
<dbReference type="InterPro" id="IPR050065">
    <property type="entry name" value="GlmU-like"/>
</dbReference>
<dbReference type="InterPro" id="IPR038009">
    <property type="entry name" value="GlmU_C_LbH"/>
</dbReference>
<dbReference type="InterPro" id="IPR025877">
    <property type="entry name" value="MobA-like_NTP_Trfase"/>
</dbReference>
<dbReference type="InterPro" id="IPR029044">
    <property type="entry name" value="Nucleotide-diphossugar_trans"/>
</dbReference>
<dbReference type="InterPro" id="IPR011004">
    <property type="entry name" value="Trimer_LpxA-like_sf"/>
</dbReference>
<dbReference type="NCBIfam" id="TIGR01173">
    <property type="entry name" value="glmU"/>
    <property type="match status" value="1"/>
</dbReference>
<dbReference type="PANTHER" id="PTHR43584:SF3">
    <property type="entry name" value="BIFUNCTIONAL PROTEIN GLMU"/>
    <property type="match status" value="1"/>
</dbReference>
<dbReference type="PANTHER" id="PTHR43584">
    <property type="entry name" value="NUCLEOTIDYL TRANSFERASE"/>
    <property type="match status" value="1"/>
</dbReference>
<dbReference type="Pfam" id="PF12804">
    <property type="entry name" value="NTP_transf_3"/>
    <property type="match status" value="1"/>
</dbReference>
<dbReference type="SUPFAM" id="SSF53448">
    <property type="entry name" value="Nucleotide-diphospho-sugar transferases"/>
    <property type="match status" value="1"/>
</dbReference>
<dbReference type="SUPFAM" id="SSF51161">
    <property type="entry name" value="Trimeric LpxA-like enzymes"/>
    <property type="match status" value="1"/>
</dbReference>
<evidence type="ECO:0000255" key="1">
    <source>
        <dbReference type="HAMAP-Rule" id="MF_01631"/>
    </source>
</evidence>
<evidence type="ECO:0000305" key="2"/>
<proteinExistence type="inferred from homology"/>
<feature type="chain" id="PRO_0000244304" description="Bifunctional protein GlmU">
    <location>
        <begin position="1"/>
        <end position="464"/>
    </location>
</feature>
<feature type="region of interest" description="Pyrophosphorylase" evidence="1">
    <location>
        <begin position="1"/>
        <end position="231"/>
    </location>
</feature>
<feature type="region of interest" description="Linker" evidence="1">
    <location>
        <begin position="232"/>
        <end position="252"/>
    </location>
</feature>
<feature type="region of interest" description="N-acetyltransferase" evidence="1">
    <location>
        <begin position="253"/>
        <end position="464"/>
    </location>
</feature>
<feature type="active site" description="Proton acceptor" evidence="1">
    <location>
        <position position="373"/>
    </location>
</feature>
<feature type="binding site" evidence="1">
    <location>
        <position position="20"/>
    </location>
    <ligand>
        <name>UDP-N-acetyl-alpha-D-glucosamine</name>
        <dbReference type="ChEBI" id="CHEBI:57705"/>
    </ligand>
</feature>
<feature type="binding site" evidence="1">
    <location>
        <position position="78"/>
    </location>
    <ligand>
        <name>UDP-N-acetyl-alpha-D-glucosamine</name>
        <dbReference type="ChEBI" id="CHEBI:57705"/>
    </ligand>
</feature>
<feature type="binding site" evidence="1">
    <location>
        <begin position="83"/>
        <end position="84"/>
    </location>
    <ligand>
        <name>UDP-N-acetyl-alpha-D-glucosamine</name>
        <dbReference type="ChEBI" id="CHEBI:57705"/>
    </ligand>
</feature>
<feature type="binding site" evidence="1">
    <location>
        <begin position="105"/>
        <end position="107"/>
    </location>
    <ligand>
        <name>UDP-N-acetyl-alpha-D-glucosamine</name>
        <dbReference type="ChEBI" id="CHEBI:57705"/>
    </ligand>
</feature>
<feature type="binding site" evidence="1">
    <location>
        <position position="107"/>
    </location>
    <ligand>
        <name>Mg(2+)</name>
        <dbReference type="ChEBI" id="CHEBI:18420"/>
    </ligand>
</feature>
<feature type="binding site" evidence="1">
    <location>
        <position position="142"/>
    </location>
    <ligand>
        <name>UDP-N-acetyl-alpha-D-glucosamine</name>
        <dbReference type="ChEBI" id="CHEBI:57705"/>
    </ligand>
</feature>
<feature type="binding site" evidence="1">
    <location>
        <position position="156"/>
    </location>
    <ligand>
        <name>UDP-N-acetyl-alpha-D-glucosamine</name>
        <dbReference type="ChEBI" id="CHEBI:57705"/>
    </ligand>
</feature>
<feature type="binding site" evidence="1">
    <location>
        <position position="229"/>
    </location>
    <ligand>
        <name>Mg(2+)</name>
        <dbReference type="ChEBI" id="CHEBI:18420"/>
    </ligand>
</feature>
<feature type="binding site" evidence="1">
    <location>
        <position position="229"/>
    </location>
    <ligand>
        <name>UDP-N-acetyl-alpha-D-glucosamine</name>
        <dbReference type="ChEBI" id="CHEBI:57705"/>
    </ligand>
</feature>
<feature type="binding site" evidence="1">
    <location>
        <position position="343"/>
    </location>
    <ligand>
        <name>UDP-N-acetyl-alpha-D-glucosamine</name>
        <dbReference type="ChEBI" id="CHEBI:57705"/>
    </ligand>
</feature>
<feature type="binding site" evidence="1">
    <location>
        <position position="361"/>
    </location>
    <ligand>
        <name>UDP-N-acetyl-alpha-D-glucosamine</name>
        <dbReference type="ChEBI" id="CHEBI:57705"/>
    </ligand>
</feature>
<feature type="binding site" evidence="1">
    <location>
        <position position="376"/>
    </location>
    <ligand>
        <name>UDP-N-acetyl-alpha-D-glucosamine</name>
        <dbReference type="ChEBI" id="CHEBI:57705"/>
    </ligand>
</feature>
<feature type="binding site" evidence="1">
    <location>
        <position position="387"/>
    </location>
    <ligand>
        <name>UDP-N-acetyl-alpha-D-glucosamine</name>
        <dbReference type="ChEBI" id="CHEBI:57705"/>
    </ligand>
</feature>
<feature type="binding site" evidence="1">
    <location>
        <position position="390"/>
    </location>
    <ligand>
        <name>acetyl-CoA</name>
        <dbReference type="ChEBI" id="CHEBI:57288"/>
    </ligand>
</feature>
<feature type="binding site" evidence="1">
    <location>
        <begin position="396"/>
        <end position="397"/>
    </location>
    <ligand>
        <name>acetyl-CoA</name>
        <dbReference type="ChEBI" id="CHEBI:57288"/>
    </ligand>
</feature>
<feature type="binding site" evidence="1">
    <location>
        <position position="415"/>
    </location>
    <ligand>
        <name>acetyl-CoA</name>
        <dbReference type="ChEBI" id="CHEBI:57288"/>
    </ligand>
</feature>
<feature type="binding site" evidence="1">
    <location>
        <position position="433"/>
    </location>
    <ligand>
        <name>acetyl-CoA</name>
        <dbReference type="ChEBI" id="CHEBI:57288"/>
    </ligand>
</feature>
<feature type="binding site" evidence="1">
    <location>
        <position position="450"/>
    </location>
    <ligand>
        <name>acetyl-CoA</name>
        <dbReference type="ChEBI" id="CHEBI:57288"/>
    </ligand>
</feature>
<comment type="function">
    <text evidence="1">Catalyzes the last two sequential reactions in the de novo biosynthetic pathway for UDP-N-acetylglucosamine (UDP-GlcNAc). The C-terminal domain catalyzes the transfer of acetyl group from acetyl coenzyme A to glucosamine-1-phosphate (GlcN-1-P) to produce N-acetylglucosamine-1-phosphate (GlcNAc-1-P), which is converted into UDP-GlcNAc by the transfer of uridine 5-monophosphate (from uridine 5-triphosphate), a reaction catalyzed by the N-terminal domain.</text>
</comment>
<comment type="catalytic activity">
    <reaction evidence="1">
        <text>alpha-D-glucosamine 1-phosphate + acetyl-CoA = N-acetyl-alpha-D-glucosamine 1-phosphate + CoA + H(+)</text>
        <dbReference type="Rhea" id="RHEA:13725"/>
        <dbReference type="ChEBI" id="CHEBI:15378"/>
        <dbReference type="ChEBI" id="CHEBI:57287"/>
        <dbReference type="ChEBI" id="CHEBI:57288"/>
        <dbReference type="ChEBI" id="CHEBI:57776"/>
        <dbReference type="ChEBI" id="CHEBI:58516"/>
        <dbReference type="EC" id="2.3.1.157"/>
    </reaction>
</comment>
<comment type="catalytic activity">
    <reaction evidence="1">
        <text>N-acetyl-alpha-D-glucosamine 1-phosphate + UTP + H(+) = UDP-N-acetyl-alpha-D-glucosamine + diphosphate</text>
        <dbReference type="Rhea" id="RHEA:13509"/>
        <dbReference type="ChEBI" id="CHEBI:15378"/>
        <dbReference type="ChEBI" id="CHEBI:33019"/>
        <dbReference type="ChEBI" id="CHEBI:46398"/>
        <dbReference type="ChEBI" id="CHEBI:57705"/>
        <dbReference type="ChEBI" id="CHEBI:57776"/>
        <dbReference type="EC" id="2.7.7.23"/>
    </reaction>
</comment>
<comment type="cofactor">
    <cofactor evidence="1">
        <name>Mg(2+)</name>
        <dbReference type="ChEBI" id="CHEBI:18420"/>
    </cofactor>
    <text evidence="1">Binds 1 Mg(2+) ion per subunit.</text>
</comment>
<comment type="pathway">
    <text evidence="1">Nucleotide-sugar biosynthesis; UDP-N-acetyl-alpha-D-glucosamine biosynthesis; N-acetyl-alpha-D-glucosamine 1-phosphate from alpha-D-glucosamine 6-phosphate (route II): step 2/2.</text>
</comment>
<comment type="pathway">
    <text evidence="1">Nucleotide-sugar biosynthesis; UDP-N-acetyl-alpha-D-glucosamine biosynthesis; UDP-N-acetyl-alpha-D-glucosamine from N-acetyl-alpha-D-glucosamine 1-phosphate: step 1/1.</text>
</comment>
<comment type="pathway">
    <text evidence="1">Bacterial outer membrane biogenesis; LPS lipid A biosynthesis.</text>
</comment>
<comment type="subunit">
    <text evidence="1">Homotrimer.</text>
</comment>
<comment type="subcellular location">
    <subcellularLocation>
        <location evidence="1">Cytoplasm</location>
    </subcellularLocation>
</comment>
<comment type="similarity">
    <text evidence="1">In the N-terminal section; belongs to the N-acetylglucosamine-1-phosphate uridyltransferase family.</text>
</comment>
<comment type="similarity">
    <text evidence="1">In the C-terminal section; belongs to the transferase hexapeptide repeat family.</text>
</comment>
<comment type="sequence caution" evidence="2">
    <conflict type="erroneous initiation">
        <sequence resource="EMBL-CDS" id="ABD68824"/>
    </conflict>
</comment>
<organism>
    <name type="scientific">Albidiferax ferrireducens (strain ATCC BAA-621 / DSM 15236 / T118)</name>
    <name type="common">Rhodoferax ferrireducens</name>
    <dbReference type="NCBI Taxonomy" id="338969"/>
    <lineage>
        <taxon>Bacteria</taxon>
        <taxon>Pseudomonadati</taxon>
        <taxon>Pseudomonadota</taxon>
        <taxon>Betaproteobacteria</taxon>
        <taxon>Burkholderiales</taxon>
        <taxon>Comamonadaceae</taxon>
        <taxon>Rhodoferax</taxon>
    </lineage>
</organism>
<sequence length="464" mass="48351">MDVVIMAAGKGTRMKSKLPKVLHLLAGRALLQHVVDTAAQLSARQVVVITGHGAMEVEAAVSGNTGASAGFDINFVRQEPQLGTGHAVQQAVPLLRDDGMVVVLSGDVPLIQAATLRHLIAAAGTDKLALLTIDFADPTGYGRIVRRGDVVQAIVEQKDATPVQREITEVYSGIMALPARQLKAWLARLDKQNAQGEYYLTDIVKFAVADGVPVVAHKIADATQVAGVNSPVQLAALERAFQSKVALQLMEQGVRLADPARLDVRGQLHCAQDVSIDVNCVFEGVVTLGEGVKIGANCVIRNATIAAGAVIHPFTHIEGGQPGSKDAVEVGAGALIGPFARLRPGAKLGQAVHIGNFVEVKNSTLARGAKANHLAYLGDATVGERVNYGAGSITANYDGAFKHRTVLEADVHIGSNCVLIAPLTIGAGGTVGGGSTVTKDTPPGALTVARAKQVSIANWKRPSK</sequence>
<keyword id="KW-0012">Acyltransferase</keyword>
<keyword id="KW-0133">Cell shape</keyword>
<keyword id="KW-0961">Cell wall biogenesis/degradation</keyword>
<keyword id="KW-0963">Cytoplasm</keyword>
<keyword id="KW-0460">Magnesium</keyword>
<keyword id="KW-0479">Metal-binding</keyword>
<keyword id="KW-0511">Multifunctional enzyme</keyword>
<keyword id="KW-0548">Nucleotidyltransferase</keyword>
<keyword id="KW-0573">Peptidoglycan synthesis</keyword>
<keyword id="KW-1185">Reference proteome</keyword>
<keyword id="KW-0677">Repeat</keyword>
<keyword id="KW-0808">Transferase</keyword>
<protein>
    <recommendedName>
        <fullName evidence="1">Bifunctional protein GlmU</fullName>
    </recommendedName>
    <domain>
        <recommendedName>
            <fullName evidence="1">UDP-N-acetylglucosamine pyrophosphorylase</fullName>
            <ecNumber evidence="1">2.7.7.23</ecNumber>
        </recommendedName>
        <alternativeName>
            <fullName evidence="1">N-acetylglucosamine-1-phosphate uridyltransferase</fullName>
        </alternativeName>
    </domain>
    <domain>
        <recommendedName>
            <fullName evidence="1">Glucosamine-1-phosphate N-acetyltransferase</fullName>
            <ecNumber evidence="1">2.3.1.157</ecNumber>
        </recommendedName>
    </domain>
</protein>
<gene>
    <name evidence="1" type="primary">glmU</name>
    <name type="ordered locus">Rfer_1083</name>
</gene>
<name>GLMU_ALBFT</name>